<name>MOAA_PECAS</name>
<keyword id="KW-0004">4Fe-4S</keyword>
<keyword id="KW-0342">GTP-binding</keyword>
<keyword id="KW-0408">Iron</keyword>
<keyword id="KW-0411">Iron-sulfur</keyword>
<keyword id="KW-0456">Lyase</keyword>
<keyword id="KW-0479">Metal-binding</keyword>
<keyword id="KW-0501">Molybdenum cofactor biosynthesis</keyword>
<keyword id="KW-0547">Nucleotide-binding</keyword>
<keyword id="KW-1185">Reference proteome</keyword>
<keyword id="KW-0949">S-adenosyl-L-methionine</keyword>
<organism>
    <name type="scientific">Pectobacterium atrosepticum (strain SCRI 1043 / ATCC BAA-672)</name>
    <name type="common">Erwinia carotovora subsp. atroseptica</name>
    <dbReference type="NCBI Taxonomy" id="218491"/>
    <lineage>
        <taxon>Bacteria</taxon>
        <taxon>Pseudomonadati</taxon>
        <taxon>Pseudomonadota</taxon>
        <taxon>Gammaproteobacteria</taxon>
        <taxon>Enterobacterales</taxon>
        <taxon>Pectobacteriaceae</taxon>
        <taxon>Pectobacterium</taxon>
    </lineage>
</organism>
<accession>Q6D3C7</accession>
<evidence type="ECO:0000255" key="1">
    <source>
        <dbReference type="HAMAP-Rule" id="MF_01225"/>
    </source>
</evidence>
<evidence type="ECO:0000255" key="2">
    <source>
        <dbReference type="PROSITE-ProRule" id="PRU01266"/>
    </source>
</evidence>
<protein>
    <recommendedName>
        <fullName evidence="1">GTP 3',8-cyclase</fullName>
        <ecNumber evidence="1">4.1.99.22</ecNumber>
    </recommendedName>
    <alternativeName>
        <fullName evidence="1">Molybdenum cofactor biosynthesis protein A</fullName>
    </alternativeName>
</protein>
<sequence length="329" mass="37175">MVSQLTDAFARKFYYLRLSITDVCNFRCTYCLPDGYQANGTNPHRFLSLDEIRRVSRAFAELGTEKVRLTGGEPSLRRDFVDIIAAIRENPAIRTLAVTTNGYRLARDVAQWRDAGLTALNVSVDSLDARQFHAITGQDKFRQVMDGIDAAFDCGFAKVKVNTVLMRDVNAGSLQTFLDWIKHRPIQLRFIELMETGEGGELFRRHHVSGEVIRQQLLQQGWQQQQRARSDGPAQVFCHPDYEGEIGLIMPYEKDFCLSCNRLRVSAIGNLHLCLFGEQGIPLRDLLADDRHLNDLKMRISGGLSTKKQTHFLHEGNSGITQNLSFIGG</sequence>
<gene>
    <name evidence="1" type="primary">moaA</name>
    <name type="ordered locus">ECA2817</name>
</gene>
<comment type="function">
    <text evidence="1">Catalyzes the cyclization of GTP to (8S)-3',8-cyclo-7,8-dihydroguanosine 5'-triphosphate.</text>
</comment>
<comment type="catalytic activity">
    <reaction evidence="1">
        <text>GTP + AH2 + S-adenosyl-L-methionine = (8S)-3',8-cyclo-7,8-dihydroguanosine 5'-triphosphate + 5'-deoxyadenosine + L-methionine + A + H(+)</text>
        <dbReference type="Rhea" id="RHEA:49576"/>
        <dbReference type="ChEBI" id="CHEBI:13193"/>
        <dbReference type="ChEBI" id="CHEBI:15378"/>
        <dbReference type="ChEBI" id="CHEBI:17319"/>
        <dbReference type="ChEBI" id="CHEBI:17499"/>
        <dbReference type="ChEBI" id="CHEBI:37565"/>
        <dbReference type="ChEBI" id="CHEBI:57844"/>
        <dbReference type="ChEBI" id="CHEBI:59789"/>
        <dbReference type="ChEBI" id="CHEBI:131766"/>
        <dbReference type="EC" id="4.1.99.22"/>
    </reaction>
</comment>
<comment type="cofactor">
    <cofactor evidence="1">
        <name>[4Fe-4S] cluster</name>
        <dbReference type="ChEBI" id="CHEBI:49883"/>
    </cofactor>
    <text evidence="1">Binds 2 [4Fe-4S] clusters. Binds 1 [4Fe-4S] cluster coordinated with 3 cysteines and an exchangeable S-adenosyl-L-methionine and 1 [4Fe-4S] cluster coordinated with 3 cysteines and the GTP-derived substrate.</text>
</comment>
<comment type="pathway">
    <text evidence="1">Cofactor biosynthesis; molybdopterin biosynthesis.</text>
</comment>
<comment type="subunit">
    <text evidence="1">Monomer and homodimer.</text>
</comment>
<comment type="similarity">
    <text evidence="1">Belongs to the radical SAM superfamily. MoaA family.</text>
</comment>
<feature type="chain" id="PRO_0000152961" description="GTP 3',8-cyclase">
    <location>
        <begin position="1"/>
        <end position="329"/>
    </location>
</feature>
<feature type="domain" description="Radical SAM core" evidence="2">
    <location>
        <begin position="8"/>
        <end position="234"/>
    </location>
</feature>
<feature type="binding site" evidence="1">
    <location>
        <position position="17"/>
    </location>
    <ligand>
        <name>GTP</name>
        <dbReference type="ChEBI" id="CHEBI:37565"/>
    </ligand>
</feature>
<feature type="binding site" evidence="1">
    <location>
        <position position="24"/>
    </location>
    <ligand>
        <name>[4Fe-4S] cluster</name>
        <dbReference type="ChEBI" id="CHEBI:49883"/>
        <label>1</label>
        <note>4Fe-4S-S-AdoMet</note>
    </ligand>
</feature>
<feature type="binding site" evidence="1">
    <location>
        <position position="28"/>
    </location>
    <ligand>
        <name>[4Fe-4S] cluster</name>
        <dbReference type="ChEBI" id="CHEBI:49883"/>
        <label>1</label>
        <note>4Fe-4S-S-AdoMet</note>
    </ligand>
</feature>
<feature type="binding site" evidence="1">
    <location>
        <position position="30"/>
    </location>
    <ligand>
        <name>S-adenosyl-L-methionine</name>
        <dbReference type="ChEBI" id="CHEBI:59789"/>
    </ligand>
</feature>
<feature type="binding site" evidence="1">
    <location>
        <position position="31"/>
    </location>
    <ligand>
        <name>[4Fe-4S] cluster</name>
        <dbReference type="ChEBI" id="CHEBI:49883"/>
        <label>1</label>
        <note>4Fe-4S-S-AdoMet</note>
    </ligand>
</feature>
<feature type="binding site" evidence="1">
    <location>
        <position position="68"/>
    </location>
    <ligand>
        <name>GTP</name>
        <dbReference type="ChEBI" id="CHEBI:37565"/>
    </ligand>
</feature>
<feature type="binding site" evidence="1">
    <location>
        <position position="72"/>
    </location>
    <ligand>
        <name>S-adenosyl-L-methionine</name>
        <dbReference type="ChEBI" id="CHEBI:59789"/>
    </ligand>
</feature>
<feature type="binding site" evidence="1">
    <location>
        <position position="99"/>
    </location>
    <ligand>
        <name>GTP</name>
        <dbReference type="ChEBI" id="CHEBI:37565"/>
    </ligand>
</feature>
<feature type="binding site" evidence="1">
    <location>
        <position position="123"/>
    </location>
    <ligand>
        <name>S-adenosyl-L-methionine</name>
        <dbReference type="ChEBI" id="CHEBI:59789"/>
    </ligand>
</feature>
<feature type="binding site" evidence="1">
    <location>
        <position position="160"/>
    </location>
    <ligand>
        <name>GTP</name>
        <dbReference type="ChEBI" id="CHEBI:37565"/>
    </ligand>
</feature>
<feature type="binding site" evidence="1">
    <location>
        <position position="194"/>
    </location>
    <ligand>
        <name>S-adenosyl-L-methionine</name>
        <dbReference type="ChEBI" id="CHEBI:59789"/>
    </ligand>
</feature>
<feature type="binding site" evidence="1">
    <location>
        <position position="257"/>
    </location>
    <ligand>
        <name>[4Fe-4S] cluster</name>
        <dbReference type="ChEBI" id="CHEBI:49883"/>
        <label>2</label>
        <note>4Fe-4S-substrate</note>
    </ligand>
</feature>
<feature type="binding site" evidence="1">
    <location>
        <position position="260"/>
    </location>
    <ligand>
        <name>[4Fe-4S] cluster</name>
        <dbReference type="ChEBI" id="CHEBI:49883"/>
        <label>2</label>
        <note>4Fe-4S-substrate</note>
    </ligand>
</feature>
<feature type="binding site" evidence="1">
    <location>
        <begin position="262"/>
        <end position="264"/>
    </location>
    <ligand>
        <name>GTP</name>
        <dbReference type="ChEBI" id="CHEBI:37565"/>
    </ligand>
</feature>
<feature type="binding site" evidence="1">
    <location>
        <position position="274"/>
    </location>
    <ligand>
        <name>[4Fe-4S] cluster</name>
        <dbReference type="ChEBI" id="CHEBI:49883"/>
        <label>2</label>
        <note>4Fe-4S-substrate</note>
    </ligand>
</feature>
<dbReference type="EC" id="4.1.99.22" evidence="1"/>
<dbReference type="EMBL" id="BX950851">
    <property type="protein sequence ID" value="CAG75717.1"/>
    <property type="molecule type" value="Genomic_DNA"/>
</dbReference>
<dbReference type="RefSeq" id="WP_011094351.1">
    <property type="nucleotide sequence ID" value="NC_004547.2"/>
</dbReference>
<dbReference type="SMR" id="Q6D3C7"/>
<dbReference type="STRING" id="218491.ECA2817"/>
<dbReference type="GeneID" id="57208493"/>
<dbReference type="KEGG" id="eca:ECA2817"/>
<dbReference type="eggNOG" id="COG2896">
    <property type="taxonomic scope" value="Bacteria"/>
</dbReference>
<dbReference type="HOGENOM" id="CLU_009273_0_1_6"/>
<dbReference type="UniPathway" id="UPA00344"/>
<dbReference type="Proteomes" id="UP000007966">
    <property type="component" value="Chromosome"/>
</dbReference>
<dbReference type="GO" id="GO:0051539">
    <property type="term" value="F:4 iron, 4 sulfur cluster binding"/>
    <property type="evidence" value="ECO:0007669"/>
    <property type="project" value="UniProtKB-UniRule"/>
</dbReference>
<dbReference type="GO" id="GO:0061799">
    <property type="term" value="F:cyclic pyranopterin monophosphate synthase activity"/>
    <property type="evidence" value="ECO:0007669"/>
    <property type="project" value="TreeGrafter"/>
</dbReference>
<dbReference type="GO" id="GO:0061798">
    <property type="term" value="F:GTP 3',8'-cyclase activity"/>
    <property type="evidence" value="ECO:0007669"/>
    <property type="project" value="UniProtKB-UniRule"/>
</dbReference>
<dbReference type="GO" id="GO:0005525">
    <property type="term" value="F:GTP binding"/>
    <property type="evidence" value="ECO:0007669"/>
    <property type="project" value="UniProtKB-UniRule"/>
</dbReference>
<dbReference type="GO" id="GO:0046872">
    <property type="term" value="F:metal ion binding"/>
    <property type="evidence" value="ECO:0007669"/>
    <property type="project" value="UniProtKB-KW"/>
</dbReference>
<dbReference type="GO" id="GO:1904047">
    <property type="term" value="F:S-adenosyl-L-methionine binding"/>
    <property type="evidence" value="ECO:0007669"/>
    <property type="project" value="UniProtKB-UniRule"/>
</dbReference>
<dbReference type="GO" id="GO:0006777">
    <property type="term" value="P:Mo-molybdopterin cofactor biosynthetic process"/>
    <property type="evidence" value="ECO:0007669"/>
    <property type="project" value="UniProtKB-UniRule"/>
</dbReference>
<dbReference type="CDD" id="cd01335">
    <property type="entry name" value="Radical_SAM"/>
    <property type="match status" value="1"/>
</dbReference>
<dbReference type="CDD" id="cd21117">
    <property type="entry name" value="Twitch_MoaA"/>
    <property type="match status" value="1"/>
</dbReference>
<dbReference type="FunFam" id="3.20.20.70:FF:000057">
    <property type="entry name" value="GTP 3',8-cyclase"/>
    <property type="match status" value="1"/>
</dbReference>
<dbReference type="Gene3D" id="3.20.20.70">
    <property type="entry name" value="Aldolase class I"/>
    <property type="match status" value="1"/>
</dbReference>
<dbReference type="HAMAP" id="MF_01225_B">
    <property type="entry name" value="MoaA_B"/>
    <property type="match status" value="1"/>
</dbReference>
<dbReference type="InterPro" id="IPR013785">
    <property type="entry name" value="Aldolase_TIM"/>
</dbReference>
<dbReference type="InterPro" id="IPR006638">
    <property type="entry name" value="Elp3/MiaA/NifB-like_rSAM"/>
</dbReference>
<dbReference type="InterPro" id="IPR013483">
    <property type="entry name" value="MoaA"/>
</dbReference>
<dbReference type="InterPro" id="IPR000385">
    <property type="entry name" value="MoaA_NifB_PqqE_Fe-S-bd_CS"/>
</dbReference>
<dbReference type="InterPro" id="IPR010505">
    <property type="entry name" value="MoaA_twitch"/>
</dbReference>
<dbReference type="InterPro" id="IPR050105">
    <property type="entry name" value="MoCo_biosynth_MoaA/MoaC"/>
</dbReference>
<dbReference type="InterPro" id="IPR007197">
    <property type="entry name" value="rSAM"/>
</dbReference>
<dbReference type="NCBIfam" id="TIGR02666">
    <property type="entry name" value="moaA"/>
    <property type="match status" value="1"/>
</dbReference>
<dbReference type="PANTHER" id="PTHR22960:SF28">
    <property type="entry name" value="GTP 3',8-CYCLASE"/>
    <property type="match status" value="1"/>
</dbReference>
<dbReference type="PANTHER" id="PTHR22960">
    <property type="entry name" value="MOLYBDOPTERIN COFACTOR SYNTHESIS PROTEIN A"/>
    <property type="match status" value="1"/>
</dbReference>
<dbReference type="Pfam" id="PF13353">
    <property type="entry name" value="Fer4_12"/>
    <property type="match status" value="1"/>
</dbReference>
<dbReference type="Pfam" id="PF06463">
    <property type="entry name" value="Mob_synth_C"/>
    <property type="match status" value="1"/>
</dbReference>
<dbReference type="Pfam" id="PF04055">
    <property type="entry name" value="Radical_SAM"/>
    <property type="match status" value="1"/>
</dbReference>
<dbReference type="SFLD" id="SFLDG01383">
    <property type="entry name" value="cyclic_pyranopterin_phosphate"/>
    <property type="match status" value="1"/>
</dbReference>
<dbReference type="SFLD" id="SFLDS00029">
    <property type="entry name" value="Radical_SAM"/>
    <property type="match status" value="1"/>
</dbReference>
<dbReference type="SMART" id="SM00729">
    <property type="entry name" value="Elp3"/>
    <property type="match status" value="1"/>
</dbReference>
<dbReference type="SUPFAM" id="SSF102114">
    <property type="entry name" value="Radical SAM enzymes"/>
    <property type="match status" value="1"/>
</dbReference>
<dbReference type="PROSITE" id="PS01305">
    <property type="entry name" value="MOAA_NIFB_PQQE"/>
    <property type="match status" value="1"/>
</dbReference>
<dbReference type="PROSITE" id="PS51918">
    <property type="entry name" value="RADICAL_SAM"/>
    <property type="match status" value="1"/>
</dbReference>
<reference key="1">
    <citation type="journal article" date="2004" name="Proc. Natl. Acad. Sci. U.S.A.">
        <title>Genome sequence of the enterobacterial phytopathogen Erwinia carotovora subsp. atroseptica and characterization of virulence factors.</title>
        <authorList>
            <person name="Bell K.S."/>
            <person name="Sebaihia M."/>
            <person name="Pritchard L."/>
            <person name="Holden M.T.G."/>
            <person name="Hyman L.J."/>
            <person name="Holeva M.C."/>
            <person name="Thomson N.R."/>
            <person name="Bentley S.D."/>
            <person name="Churcher L.J.C."/>
            <person name="Mungall K."/>
            <person name="Atkin R."/>
            <person name="Bason N."/>
            <person name="Brooks K."/>
            <person name="Chillingworth T."/>
            <person name="Clark K."/>
            <person name="Doggett J."/>
            <person name="Fraser A."/>
            <person name="Hance Z."/>
            <person name="Hauser H."/>
            <person name="Jagels K."/>
            <person name="Moule S."/>
            <person name="Norbertczak H."/>
            <person name="Ormond D."/>
            <person name="Price C."/>
            <person name="Quail M.A."/>
            <person name="Sanders M."/>
            <person name="Walker D."/>
            <person name="Whitehead S."/>
            <person name="Salmond G.P.C."/>
            <person name="Birch P.R.J."/>
            <person name="Parkhill J."/>
            <person name="Toth I.K."/>
        </authorList>
    </citation>
    <scope>NUCLEOTIDE SEQUENCE [LARGE SCALE GENOMIC DNA]</scope>
    <source>
        <strain>SCRI 1043 / ATCC BAA-672</strain>
    </source>
</reference>
<proteinExistence type="inferred from homology"/>